<name>COX3_DICDI</name>
<accession>O21049</accession>
<sequence>MKGFFENLFRQNVRSVINTGKKVGARAAAREIINQEWGYPLANHEVLFLTNVYQPKHMKRHPFHIVRGTVAPLAVTLPLGFFVLNYFGVISSKLGLLIALSSFIGGLVIWTISIIFDSLYDQQHTYEVKRGLVMGMMMFIISEVMFFFSFFWSYFYISLSPNIAIGCVWPPYGLTVYSYMGLPLLNTVLLLLSGAILTDGYTILTEQKAVHEKNEKVLAVEEAFKNLMNLYKTKNSINTLTFVDERRDKFFGKESRQEDKIAEQKLIAISAGVKELRDLDWDLYFFENPENIEPNYKEPTNLSVIEYALITIYLKKRNKVIKTRLYFTLLCAVVFLACQGYEYFFAPFSMNDGIYGSLFFLLTGFHGFHVLVGSILIGIITIRFIVGNFNLLNVGTNFQIYKNKSTGFACTLFYWHFVDIVWIFLYIVIYWWGSR</sequence>
<organism>
    <name type="scientific">Dictyostelium discoideum</name>
    <name type="common">Social amoeba</name>
    <dbReference type="NCBI Taxonomy" id="44689"/>
    <lineage>
        <taxon>Eukaryota</taxon>
        <taxon>Amoebozoa</taxon>
        <taxon>Evosea</taxon>
        <taxon>Eumycetozoa</taxon>
        <taxon>Dictyostelia</taxon>
        <taxon>Dictyosteliales</taxon>
        <taxon>Dictyosteliaceae</taxon>
        <taxon>Dictyostelium</taxon>
    </lineage>
</organism>
<evidence type="ECO:0000250" key="1">
    <source>
        <dbReference type="UniProtKB" id="P00420"/>
    </source>
</evidence>
<evidence type="ECO:0000255" key="2"/>
<evidence type="ECO:0000305" key="3"/>
<dbReference type="EC" id="7.1.1.9"/>
<dbReference type="EMBL" id="D16579">
    <property type="protein sequence ID" value="BAA21120.1"/>
    <property type="molecule type" value="Genomic_DNA"/>
</dbReference>
<dbReference type="EMBL" id="AB000109">
    <property type="protein sequence ID" value="BAA78053.1"/>
    <property type="molecule type" value="Genomic_DNA"/>
</dbReference>
<dbReference type="PIR" id="T43749">
    <property type="entry name" value="T43749"/>
</dbReference>
<dbReference type="RefSeq" id="NP_050071.1">
    <property type="nucleotide sequence ID" value="NC_000895.1"/>
</dbReference>
<dbReference type="SMR" id="O21049"/>
<dbReference type="FunCoup" id="O21049">
    <property type="interactions" value="44"/>
</dbReference>
<dbReference type="STRING" id="44689.O21049"/>
<dbReference type="GeneID" id="2193893"/>
<dbReference type="KEGG" id="ddi:DidioMp04"/>
<dbReference type="dictyBase" id="DDB_G0294092">
    <property type="gene designation" value="cox3"/>
</dbReference>
<dbReference type="VEuPathDB" id="AmoebaDB:DidioMp04"/>
<dbReference type="InParanoid" id="O21049"/>
<dbReference type="PhylomeDB" id="O21049"/>
<dbReference type="PRO" id="PR:O21049"/>
<dbReference type="Proteomes" id="UP000002195">
    <property type="component" value="Mitochondrion"/>
</dbReference>
<dbReference type="GO" id="GO:0005743">
    <property type="term" value="C:mitochondrial inner membrane"/>
    <property type="evidence" value="ECO:0007669"/>
    <property type="project" value="UniProtKB-SubCell"/>
</dbReference>
<dbReference type="GO" id="GO:0005739">
    <property type="term" value="C:mitochondrion"/>
    <property type="evidence" value="ECO:0000318"/>
    <property type="project" value="GO_Central"/>
</dbReference>
<dbReference type="GO" id="GO:0004129">
    <property type="term" value="F:cytochrome-c oxidase activity"/>
    <property type="evidence" value="ECO:0007669"/>
    <property type="project" value="UniProtKB-EC"/>
</dbReference>
<dbReference type="GO" id="GO:0006123">
    <property type="term" value="P:mitochondrial electron transport, cytochrome c to oxygen"/>
    <property type="evidence" value="ECO:0000318"/>
    <property type="project" value="GO_Central"/>
</dbReference>
<dbReference type="CDD" id="cd01665">
    <property type="entry name" value="Cyt_c_Oxidase_III"/>
    <property type="match status" value="1"/>
</dbReference>
<dbReference type="Gene3D" id="1.20.120.80">
    <property type="entry name" value="Cytochrome c oxidase, subunit III, four-helix bundle"/>
    <property type="match status" value="2"/>
</dbReference>
<dbReference type="InterPro" id="IPR024791">
    <property type="entry name" value="Cyt_c/ubiquinol_Oxase_su3"/>
</dbReference>
<dbReference type="InterPro" id="IPR033945">
    <property type="entry name" value="Cyt_c_oxase_su3_dom"/>
</dbReference>
<dbReference type="InterPro" id="IPR000298">
    <property type="entry name" value="Cyt_c_oxidase-like_su3"/>
</dbReference>
<dbReference type="InterPro" id="IPR035973">
    <property type="entry name" value="Cyt_c_oxidase_su3-like_sf"/>
</dbReference>
<dbReference type="InterPro" id="IPR013833">
    <property type="entry name" value="Cyt_c_oxidase_su3_a-hlx"/>
</dbReference>
<dbReference type="PANTHER" id="PTHR11403:SF7">
    <property type="entry name" value="CYTOCHROME C OXIDASE SUBUNIT 3"/>
    <property type="match status" value="1"/>
</dbReference>
<dbReference type="PANTHER" id="PTHR11403">
    <property type="entry name" value="CYTOCHROME C OXIDASE SUBUNIT III"/>
    <property type="match status" value="1"/>
</dbReference>
<dbReference type="Pfam" id="PF00510">
    <property type="entry name" value="COX3"/>
    <property type="match status" value="2"/>
</dbReference>
<dbReference type="SUPFAM" id="SSF81452">
    <property type="entry name" value="Cytochrome c oxidase subunit III-like"/>
    <property type="match status" value="2"/>
</dbReference>
<dbReference type="PROSITE" id="PS50253">
    <property type="entry name" value="COX3"/>
    <property type="match status" value="1"/>
</dbReference>
<protein>
    <recommendedName>
        <fullName>Cytochrome c oxidase subunit 3</fullName>
        <ecNumber>7.1.1.9</ecNumber>
    </recommendedName>
    <alternativeName>
        <fullName>Cytochrome c oxidase polypeptide III</fullName>
    </alternativeName>
</protein>
<keyword id="KW-0472">Membrane</keyword>
<keyword id="KW-0496">Mitochondrion</keyword>
<keyword id="KW-0999">Mitochondrion inner membrane</keyword>
<keyword id="KW-1185">Reference proteome</keyword>
<keyword id="KW-1278">Translocase</keyword>
<keyword id="KW-0812">Transmembrane</keyword>
<keyword id="KW-1133">Transmembrane helix</keyword>
<feature type="chain" id="PRO_0000312370" description="Cytochrome c oxidase subunit 3">
    <location>
        <begin position="1"/>
        <end position="435"/>
    </location>
</feature>
<feature type="transmembrane region" description="Helical" evidence="2">
    <location>
        <begin position="70"/>
        <end position="90"/>
    </location>
</feature>
<feature type="transmembrane region" description="Helical" evidence="2">
    <location>
        <begin position="96"/>
        <end position="116"/>
    </location>
</feature>
<feature type="transmembrane region" description="Helical" evidence="2">
    <location>
        <begin position="132"/>
        <end position="152"/>
    </location>
</feature>
<feature type="transmembrane region" description="Helical" evidence="2">
    <location>
        <begin position="176"/>
        <end position="196"/>
    </location>
</feature>
<feature type="transmembrane region" description="Helical" evidence="2">
    <location>
        <begin position="325"/>
        <end position="345"/>
    </location>
</feature>
<feature type="transmembrane region" description="Helical" evidence="2">
    <location>
        <begin position="360"/>
        <end position="380"/>
    </location>
</feature>
<feature type="transmembrane region" description="Helical" evidence="2">
    <location>
        <begin position="412"/>
        <end position="432"/>
    </location>
</feature>
<comment type="function">
    <text evidence="1">Component of the cytochrome c oxidase, the last enzyme in the mitochondrial electron transport chain which drives oxidative phosphorylation. The respiratory chain contains 3 multisubunit complexes succinate dehydrogenase (complex II, CII), ubiquinol-cytochrome c oxidoreductase (cytochrome b-c1 complex, complex III, CIII) and cytochrome c oxidase (complex IV, CIV), that cooperate to transfer electrons derived from NADH and succinate to molecular oxygen, creating an electrochemical gradient over the inner membrane that drives transmembrane transport and the ATP synthase. Cytochrome c oxidase is the component of the respiratory chain that catalyzes the reduction of oxygen to water. Electrons originating from reduced cytochrome c in the intermembrane space (IMS) are transferred via the dinuclear copper A center (CU(A)) of subunit 2 and heme A of subunit 1 to the active site in subunit 1, a binuclear center (BNC) formed by heme A3 and copper B (CU(B)). The BNC reduces molecular oxygen to 2 water molecules using 4 electrons from cytochrome c in the IMS and 4 protons from the mitochondrial matrix.</text>
</comment>
<comment type="catalytic activity">
    <reaction evidence="1">
        <text>4 Fe(II)-[cytochrome c] + O2 + 8 H(+)(in) = 4 Fe(III)-[cytochrome c] + 2 H2O + 4 H(+)(out)</text>
        <dbReference type="Rhea" id="RHEA:11436"/>
        <dbReference type="Rhea" id="RHEA-COMP:10350"/>
        <dbReference type="Rhea" id="RHEA-COMP:14399"/>
        <dbReference type="ChEBI" id="CHEBI:15377"/>
        <dbReference type="ChEBI" id="CHEBI:15378"/>
        <dbReference type="ChEBI" id="CHEBI:15379"/>
        <dbReference type="ChEBI" id="CHEBI:29033"/>
        <dbReference type="ChEBI" id="CHEBI:29034"/>
        <dbReference type="EC" id="7.1.1.9"/>
    </reaction>
    <physiologicalReaction direction="left-to-right" evidence="1">
        <dbReference type="Rhea" id="RHEA:11437"/>
    </physiologicalReaction>
</comment>
<comment type="subunit">
    <text evidence="1">Component of the cytochrome c oxidase (complex IV, CIV), a multisubunit enzyme composed of a catalytic core of 3 subunits and several supernumerary subunits. The complex exists as a monomer or a dimer and forms supercomplexes (SCs) in the inner mitochondrial membrane with ubiquinol-cytochrome c oxidoreductase (cytochrome b-c1 complex, complex III, CIII).</text>
</comment>
<comment type="subcellular location">
    <subcellularLocation>
        <location evidence="1">Mitochondrion inner membrane</location>
        <topology evidence="1">Multi-pass membrane protein</topology>
    </subcellularLocation>
</comment>
<comment type="similarity">
    <text evidence="3">Belongs to the cytochrome c oxidase subunit 3 family.</text>
</comment>
<gene>
    <name type="primary">cox3</name>
    <name type="ORF">DDB_G0294092</name>
</gene>
<reference key="1">
    <citation type="journal article" date="1997" name="Curr. Genet.">
        <title>Group-I introns in the cytochrome c oxidase genes of Dictyostelium discoideum: two related ORFs in one loop of a group-I intron, a cox1/2 hybrid gene and an unusually large cox3 gene.</title>
        <authorList>
            <person name="Ogawa S."/>
            <person name="Matsuo K."/>
            <person name="Angata K."/>
            <person name="Yanagisawa K."/>
            <person name="Tanaka Y."/>
        </authorList>
    </citation>
    <scope>NUCLEOTIDE SEQUENCE [GENOMIC DNA]</scope>
    <source>
        <strain>AX3</strain>
    </source>
</reference>
<reference key="2">
    <citation type="journal article" date="2000" name="Mol. Gen. Genet.">
        <title>The mitochondrial DNA of Dictyostelium discoideum: complete sequence, gene content and genome organization.</title>
        <authorList>
            <person name="Ogawa S."/>
            <person name="Yoshino R."/>
            <person name="Angata K."/>
            <person name="Iwamoto M."/>
            <person name="Pi M."/>
            <person name="Kuroe K."/>
            <person name="Matsuo K."/>
            <person name="Morio T."/>
            <person name="Urushihara H."/>
            <person name="Yanagisawa K."/>
            <person name="Tanaka Y."/>
        </authorList>
    </citation>
    <scope>NUCLEOTIDE SEQUENCE [LARGE SCALE GENOMIC DNA]</scope>
    <source>
        <strain>AX3</strain>
    </source>
</reference>
<proteinExistence type="inferred from homology"/>
<geneLocation type="mitochondrion"/>